<gene>
    <name evidence="1" type="primary">pepE</name>
    <name type="ordered locus">CGSHiGG_06345</name>
</gene>
<sequence length="234" mass="26384">MKNMLLLSSSKYKNTGYLEHTLPWLQNFLADYRGKTIAFVPYAGVRRTFDEYEKTVQNALSYLEMNIVSVHHGKQHRDIIEQADVIAIGGGNTFCLLKQLYEHNLIDIIREKVNNSTPYFGWSAGANVVGASIMTTNDMPITYPPSFQALQLFPHQINPHFISGKMQGHNGESREERLAEFLLVNPTALVYALPEGSALHIQNEMATVLGENPILCFSENMECGTFDINTTFSY</sequence>
<reference key="1">
    <citation type="journal article" date="2007" name="Genome Biol.">
        <title>Characterization and modeling of the Haemophilus influenzae core and supragenomes based on the complete genomic sequences of Rd and 12 clinical nontypeable strains.</title>
        <authorList>
            <person name="Hogg J.S."/>
            <person name="Hu F.Z."/>
            <person name="Janto B."/>
            <person name="Boissy R."/>
            <person name="Hayes J."/>
            <person name="Keefe R."/>
            <person name="Post J.C."/>
            <person name="Ehrlich G.D."/>
        </authorList>
    </citation>
    <scope>NUCLEOTIDE SEQUENCE [LARGE SCALE GENOMIC DNA]</scope>
    <source>
        <strain>PittGG</strain>
    </source>
</reference>
<accession>A5UHB4</accession>
<protein>
    <recommendedName>
        <fullName evidence="1">Peptidase E</fullName>
        <ecNumber evidence="1">3.4.13.21</ecNumber>
    </recommendedName>
    <alternativeName>
        <fullName evidence="1">Alpha-aspartyl dipeptidase</fullName>
    </alternativeName>
    <alternativeName>
        <fullName evidence="1">Asp-specific dipeptidase</fullName>
    </alternativeName>
    <alternativeName>
        <fullName evidence="1">Dipeptidase E</fullName>
    </alternativeName>
</protein>
<feature type="chain" id="PRO_1000050612" description="Peptidase E">
    <location>
        <begin position="1"/>
        <end position="234"/>
    </location>
</feature>
<feature type="active site" description="Charge relay system" evidence="1">
    <location>
        <position position="123"/>
    </location>
</feature>
<feature type="active site" description="Charge relay system" evidence="1">
    <location>
        <position position="138"/>
    </location>
</feature>
<feature type="active site" description="Charge relay system" evidence="1">
    <location>
        <position position="160"/>
    </location>
</feature>
<evidence type="ECO:0000255" key="1">
    <source>
        <dbReference type="HAMAP-Rule" id="MF_00510"/>
    </source>
</evidence>
<keyword id="KW-0963">Cytoplasm</keyword>
<keyword id="KW-0224">Dipeptidase</keyword>
<keyword id="KW-0378">Hydrolase</keyword>
<keyword id="KW-0645">Protease</keyword>
<keyword id="KW-0720">Serine protease</keyword>
<dbReference type="EC" id="3.4.13.21" evidence="1"/>
<dbReference type="EMBL" id="CP000672">
    <property type="protein sequence ID" value="ABR00170.1"/>
    <property type="molecule type" value="Genomic_DNA"/>
</dbReference>
<dbReference type="SMR" id="A5UHB4"/>
<dbReference type="MEROPS" id="S51.001"/>
<dbReference type="KEGG" id="hiq:CGSHiGG_06345"/>
<dbReference type="HOGENOM" id="CLU_071689_0_0_6"/>
<dbReference type="Proteomes" id="UP000001990">
    <property type="component" value="Chromosome"/>
</dbReference>
<dbReference type="GO" id="GO:0005737">
    <property type="term" value="C:cytoplasm"/>
    <property type="evidence" value="ECO:0007669"/>
    <property type="project" value="UniProtKB-SubCell"/>
</dbReference>
<dbReference type="GO" id="GO:0016805">
    <property type="term" value="F:dipeptidase activity"/>
    <property type="evidence" value="ECO:0007669"/>
    <property type="project" value="UniProtKB-UniRule"/>
</dbReference>
<dbReference type="GO" id="GO:0008236">
    <property type="term" value="F:serine-type peptidase activity"/>
    <property type="evidence" value="ECO:0007669"/>
    <property type="project" value="UniProtKB-KW"/>
</dbReference>
<dbReference type="GO" id="GO:0006508">
    <property type="term" value="P:proteolysis"/>
    <property type="evidence" value="ECO:0007669"/>
    <property type="project" value="UniProtKB-UniRule"/>
</dbReference>
<dbReference type="CDD" id="cd03146">
    <property type="entry name" value="GAT1_Peptidase_E"/>
    <property type="match status" value="1"/>
</dbReference>
<dbReference type="FunFam" id="3.40.50.880:FF:000007">
    <property type="entry name" value="Peptidase E"/>
    <property type="match status" value="1"/>
</dbReference>
<dbReference type="Gene3D" id="3.40.50.880">
    <property type="match status" value="1"/>
</dbReference>
<dbReference type="HAMAP" id="MF_00510">
    <property type="entry name" value="Peptidase_E"/>
    <property type="match status" value="1"/>
</dbReference>
<dbReference type="InterPro" id="IPR029062">
    <property type="entry name" value="Class_I_gatase-like"/>
</dbReference>
<dbReference type="InterPro" id="IPR005320">
    <property type="entry name" value="Peptidase_S51"/>
</dbReference>
<dbReference type="InterPro" id="IPR023172">
    <property type="entry name" value="Peptidase_S51_dipeptidase-E"/>
</dbReference>
<dbReference type="NCBIfam" id="NF003642">
    <property type="entry name" value="PRK05282.1"/>
    <property type="match status" value="1"/>
</dbReference>
<dbReference type="PANTHER" id="PTHR20842:SF0">
    <property type="entry name" value="ALPHA-ASPARTYL DIPEPTIDASE"/>
    <property type="match status" value="1"/>
</dbReference>
<dbReference type="PANTHER" id="PTHR20842">
    <property type="entry name" value="PROTEASE S51 ALPHA-ASPARTYL DIPEPTIDASE"/>
    <property type="match status" value="1"/>
</dbReference>
<dbReference type="Pfam" id="PF03575">
    <property type="entry name" value="Peptidase_S51"/>
    <property type="match status" value="1"/>
</dbReference>
<dbReference type="SUPFAM" id="SSF52317">
    <property type="entry name" value="Class I glutamine amidotransferase-like"/>
    <property type="match status" value="1"/>
</dbReference>
<proteinExistence type="inferred from homology"/>
<comment type="function">
    <text evidence="1">Hydrolyzes dipeptides containing N-terminal aspartate residues. May play a role in allowing the cell to use peptide aspartate to spare carbon otherwise required for the synthesis of the aspartate family of amino acids.</text>
</comment>
<comment type="catalytic activity">
    <reaction evidence="1">
        <text>Dipeptidase E catalyzes the hydrolysis of dipeptides Asp-|-Xaa. It does not act on peptides with N-terminal Glu, Asn or Gln, nor does it cleave isoaspartyl peptides.</text>
        <dbReference type="EC" id="3.4.13.21"/>
    </reaction>
</comment>
<comment type="subcellular location">
    <subcellularLocation>
        <location evidence="1">Cytoplasm</location>
    </subcellularLocation>
</comment>
<comment type="similarity">
    <text evidence="1">Belongs to the peptidase S51 family.</text>
</comment>
<organism>
    <name type="scientific">Haemophilus influenzae (strain PittGG)</name>
    <dbReference type="NCBI Taxonomy" id="374931"/>
    <lineage>
        <taxon>Bacteria</taxon>
        <taxon>Pseudomonadati</taxon>
        <taxon>Pseudomonadota</taxon>
        <taxon>Gammaproteobacteria</taxon>
        <taxon>Pasteurellales</taxon>
        <taxon>Pasteurellaceae</taxon>
        <taxon>Haemophilus</taxon>
    </lineage>
</organism>
<name>PEPE_HAEIG</name>